<gene>
    <name evidence="1" type="primary">caiD</name>
    <name type="ordered locus">EcolC_3619</name>
</gene>
<organism>
    <name type="scientific">Escherichia coli (strain ATCC 8739 / DSM 1576 / NBRC 3972 / NCIMB 8545 / WDCM 00012 / Crooks)</name>
    <dbReference type="NCBI Taxonomy" id="481805"/>
    <lineage>
        <taxon>Bacteria</taxon>
        <taxon>Pseudomonadati</taxon>
        <taxon>Pseudomonadota</taxon>
        <taxon>Gammaproteobacteria</taxon>
        <taxon>Enterobacterales</taxon>
        <taxon>Enterobacteriaceae</taxon>
        <taxon>Escherichia</taxon>
    </lineage>
</organism>
<reference key="1">
    <citation type="submission" date="2008-02" db="EMBL/GenBank/DDBJ databases">
        <title>Complete sequence of Escherichia coli C str. ATCC 8739.</title>
        <authorList>
            <person name="Copeland A."/>
            <person name="Lucas S."/>
            <person name="Lapidus A."/>
            <person name="Glavina del Rio T."/>
            <person name="Dalin E."/>
            <person name="Tice H."/>
            <person name="Bruce D."/>
            <person name="Goodwin L."/>
            <person name="Pitluck S."/>
            <person name="Kiss H."/>
            <person name="Brettin T."/>
            <person name="Detter J.C."/>
            <person name="Han C."/>
            <person name="Kuske C.R."/>
            <person name="Schmutz J."/>
            <person name="Larimer F."/>
            <person name="Land M."/>
            <person name="Hauser L."/>
            <person name="Kyrpides N."/>
            <person name="Mikhailova N."/>
            <person name="Ingram L."/>
            <person name="Richardson P."/>
        </authorList>
    </citation>
    <scope>NUCLEOTIDE SEQUENCE [LARGE SCALE GENOMIC DNA]</scope>
    <source>
        <strain>ATCC 8739 / DSM 1576 / NBRC 3972 / NCIMB 8545 / WDCM 00012 / Crooks</strain>
    </source>
</reference>
<dbReference type="EC" id="4.2.1.149" evidence="1"/>
<dbReference type="EMBL" id="CP000946">
    <property type="protein sequence ID" value="ACA79233.1"/>
    <property type="molecule type" value="Genomic_DNA"/>
</dbReference>
<dbReference type="RefSeq" id="WP_001295419.1">
    <property type="nucleotide sequence ID" value="NZ_MTFT01000035.1"/>
</dbReference>
<dbReference type="SMR" id="B1IRE0"/>
<dbReference type="KEGG" id="ecl:EcolC_3619"/>
<dbReference type="HOGENOM" id="CLU_009834_7_6_6"/>
<dbReference type="UniPathway" id="UPA00117"/>
<dbReference type="GO" id="GO:0016836">
    <property type="term" value="F:hydro-lyase activity"/>
    <property type="evidence" value="ECO:0007669"/>
    <property type="project" value="UniProtKB-UniRule"/>
</dbReference>
<dbReference type="GO" id="GO:0008735">
    <property type="term" value="F:L-carnitine CoA-transferase activity"/>
    <property type="evidence" value="ECO:0007669"/>
    <property type="project" value="RHEA"/>
</dbReference>
<dbReference type="GO" id="GO:0009437">
    <property type="term" value="P:carnitine metabolic process"/>
    <property type="evidence" value="ECO:0007669"/>
    <property type="project" value="UniProtKB-UniRule"/>
</dbReference>
<dbReference type="GO" id="GO:0006635">
    <property type="term" value="P:fatty acid beta-oxidation"/>
    <property type="evidence" value="ECO:0007669"/>
    <property type="project" value="TreeGrafter"/>
</dbReference>
<dbReference type="CDD" id="cd06558">
    <property type="entry name" value="crotonase-like"/>
    <property type="match status" value="1"/>
</dbReference>
<dbReference type="FunFam" id="1.10.12.10:FF:000005">
    <property type="entry name" value="Carnitinyl-CoA dehydratase"/>
    <property type="match status" value="1"/>
</dbReference>
<dbReference type="FunFam" id="3.90.226.10:FF:000009">
    <property type="entry name" value="Carnitinyl-CoA dehydratase"/>
    <property type="match status" value="1"/>
</dbReference>
<dbReference type="Gene3D" id="3.90.226.10">
    <property type="entry name" value="2-enoyl-CoA Hydratase, Chain A, domain 1"/>
    <property type="match status" value="1"/>
</dbReference>
<dbReference type="Gene3D" id="1.10.12.10">
    <property type="entry name" value="Lyase 2-enoyl-coa Hydratase, Chain A, domain 2"/>
    <property type="match status" value="1"/>
</dbReference>
<dbReference type="HAMAP" id="MF_01051">
    <property type="entry name" value="CaiD"/>
    <property type="match status" value="1"/>
</dbReference>
<dbReference type="InterPro" id="IPR022852">
    <property type="entry name" value="Carnitinyl_CoA_dehydratase"/>
</dbReference>
<dbReference type="InterPro" id="IPR029045">
    <property type="entry name" value="ClpP/crotonase-like_dom_sf"/>
</dbReference>
<dbReference type="InterPro" id="IPR018376">
    <property type="entry name" value="Enoyl-CoA_hyd/isom_CS"/>
</dbReference>
<dbReference type="InterPro" id="IPR001753">
    <property type="entry name" value="Enoyl-CoA_hydra/iso"/>
</dbReference>
<dbReference type="InterPro" id="IPR014748">
    <property type="entry name" value="Enoyl-CoA_hydra_C"/>
</dbReference>
<dbReference type="NCBIfam" id="NF002936">
    <property type="entry name" value="PRK03580.1"/>
    <property type="match status" value="1"/>
</dbReference>
<dbReference type="PANTHER" id="PTHR11941:SF54">
    <property type="entry name" value="ENOYL-COA HYDRATASE, MITOCHONDRIAL"/>
    <property type="match status" value="1"/>
</dbReference>
<dbReference type="PANTHER" id="PTHR11941">
    <property type="entry name" value="ENOYL-COA HYDRATASE-RELATED"/>
    <property type="match status" value="1"/>
</dbReference>
<dbReference type="Pfam" id="PF00378">
    <property type="entry name" value="ECH_1"/>
    <property type="match status" value="1"/>
</dbReference>
<dbReference type="SUPFAM" id="SSF52096">
    <property type="entry name" value="ClpP/crotonase"/>
    <property type="match status" value="1"/>
</dbReference>
<dbReference type="PROSITE" id="PS00166">
    <property type="entry name" value="ENOYL_COA_HYDRATASE"/>
    <property type="match status" value="1"/>
</dbReference>
<keyword id="KW-0456">Lyase</keyword>
<comment type="function">
    <text evidence="1">Catalyzes the reversible dehydration of L-carnitinyl-CoA to crotonobetainyl-CoA.</text>
</comment>
<comment type="catalytic activity">
    <reaction evidence="1">
        <text>(R)-carnitinyl-CoA = crotonobetainyl-CoA + H2O</text>
        <dbReference type="Rhea" id="RHEA:28338"/>
        <dbReference type="ChEBI" id="CHEBI:15377"/>
        <dbReference type="ChEBI" id="CHEBI:60932"/>
        <dbReference type="ChEBI" id="CHEBI:60933"/>
        <dbReference type="EC" id="4.2.1.149"/>
    </reaction>
</comment>
<comment type="pathway">
    <text evidence="1">Amine and polyamine metabolism; carnitine metabolism.</text>
</comment>
<comment type="similarity">
    <text evidence="1">Belongs to the enoyl-CoA hydratase/isomerase family.</text>
</comment>
<protein>
    <recommendedName>
        <fullName evidence="1">Carnitinyl-CoA dehydratase</fullName>
        <ecNumber evidence="1">4.2.1.149</ecNumber>
    </recommendedName>
    <alternativeName>
        <fullName evidence="1">Crotonobetainyl-CoA hydratase</fullName>
    </alternativeName>
</protein>
<name>CAID_ECOLC</name>
<proteinExistence type="inferred from homology"/>
<evidence type="ECO:0000255" key="1">
    <source>
        <dbReference type="HAMAP-Rule" id="MF_01051"/>
    </source>
</evidence>
<accession>B1IRE0</accession>
<feature type="chain" id="PRO_1000084425" description="Carnitinyl-CoA dehydratase">
    <location>
        <begin position="1"/>
        <end position="261"/>
    </location>
</feature>
<feature type="active site" description="Nucleophile" evidence="1">
    <location>
        <position position="111"/>
    </location>
</feature>
<feature type="active site" description="Proton acceptor" evidence="1">
    <location>
        <position position="131"/>
    </location>
</feature>
<sequence length="261" mass="28190">MSESLHLTRNGSILEITLDRPKANAIDAKTSFEMGEVFLNFRDDPQLRVAIITGAGEKFFSAGWDLKAAAEGEAPDADFGPGGFAGLTEIFNLDKPVIAAVNGYAFGGGFELALAADFIVCADNASFALPEAKLGIVPDSGGVLRLPKILPPAIVNEMVMTGRRMGAEEALRWGIVNRVVSQAELMDNARELAQQLVNSAPLAIAALKEIYRTTSEMPVEEAYRYIRSGVLKHYPSVLHSEDAIEGPLAFAEKRDPVWKGR</sequence>